<protein>
    <recommendedName>
        <fullName evidence="1">Ubiquinone biosynthesis O-methyltransferase</fullName>
    </recommendedName>
    <alternativeName>
        <fullName evidence="1">2-polyprenyl-6-hydroxyphenol methylase</fullName>
        <ecNumber evidence="1">2.1.1.222</ecNumber>
    </alternativeName>
    <alternativeName>
        <fullName evidence="1">3-demethylubiquinone 3-O-methyltransferase</fullName>
        <ecNumber evidence="1">2.1.1.64</ecNumber>
    </alternativeName>
</protein>
<feature type="chain" id="PRO_1000081221" description="Ubiquinone biosynthesis O-methyltransferase">
    <location>
        <begin position="1"/>
        <end position="238"/>
    </location>
</feature>
<feature type="binding site" evidence="1">
    <location>
        <position position="36"/>
    </location>
    <ligand>
        <name>S-adenosyl-L-methionine</name>
        <dbReference type="ChEBI" id="CHEBI:59789"/>
    </ligand>
</feature>
<feature type="binding site" evidence="1">
    <location>
        <position position="56"/>
    </location>
    <ligand>
        <name>S-adenosyl-L-methionine</name>
        <dbReference type="ChEBI" id="CHEBI:59789"/>
    </ligand>
</feature>
<feature type="binding site" evidence="1">
    <location>
        <position position="77"/>
    </location>
    <ligand>
        <name>S-adenosyl-L-methionine</name>
        <dbReference type="ChEBI" id="CHEBI:59789"/>
    </ligand>
</feature>
<feature type="binding site" evidence="1">
    <location>
        <position position="125"/>
    </location>
    <ligand>
        <name>S-adenosyl-L-methionine</name>
        <dbReference type="ChEBI" id="CHEBI:59789"/>
    </ligand>
</feature>
<evidence type="ECO:0000255" key="1">
    <source>
        <dbReference type="HAMAP-Rule" id="MF_00472"/>
    </source>
</evidence>
<organism>
    <name type="scientific">Histophilus somni (strain 2336)</name>
    <name type="common">Haemophilus somnus</name>
    <dbReference type="NCBI Taxonomy" id="228400"/>
    <lineage>
        <taxon>Bacteria</taxon>
        <taxon>Pseudomonadati</taxon>
        <taxon>Pseudomonadota</taxon>
        <taxon>Gammaproteobacteria</taxon>
        <taxon>Pasteurellales</taxon>
        <taxon>Pasteurellaceae</taxon>
        <taxon>Histophilus</taxon>
    </lineage>
</organism>
<comment type="function">
    <text evidence="1">O-methyltransferase that catalyzes the 2 O-methylation steps in the ubiquinone biosynthetic pathway.</text>
</comment>
<comment type="catalytic activity">
    <reaction evidence="1">
        <text>a 3-demethylubiquinol + S-adenosyl-L-methionine = a ubiquinol + S-adenosyl-L-homocysteine + H(+)</text>
        <dbReference type="Rhea" id="RHEA:44380"/>
        <dbReference type="Rhea" id="RHEA-COMP:9566"/>
        <dbReference type="Rhea" id="RHEA-COMP:10914"/>
        <dbReference type="ChEBI" id="CHEBI:15378"/>
        <dbReference type="ChEBI" id="CHEBI:17976"/>
        <dbReference type="ChEBI" id="CHEBI:57856"/>
        <dbReference type="ChEBI" id="CHEBI:59789"/>
        <dbReference type="ChEBI" id="CHEBI:84422"/>
        <dbReference type="EC" id="2.1.1.64"/>
    </reaction>
</comment>
<comment type="catalytic activity">
    <reaction evidence="1">
        <text>a 3-(all-trans-polyprenyl)benzene-1,2-diol + S-adenosyl-L-methionine = a 2-methoxy-6-(all-trans-polyprenyl)phenol + S-adenosyl-L-homocysteine + H(+)</text>
        <dbReference type="Rhea" id="RHEA:31411"/>
        <dbReference type="Rhea" id="RHEA-COMP:9550"/>
        <dbReference type="Rhea" id="RHEA-COMP:9551"/>
        <dbReference type="ChEBI" id="CHEBI:15378"/>
        <dbReference type="ChEBI" id="CHEBI:57856"/>
        <dbReference type="ChEBI" id="CHEBI:59789"/>
        <dbReference type="ChEBI" id="CHEBI:62729"/>
        <dbReference type="ChEBI" id="CHEBI:62731"/>
        <dbReference type="EC" id="2.1.1.222"/>
    </reaction>
</comment>
<comment type="pathway">
    <text evidence="1">Cofactor biosynthesis; ubiquinone biosynthesis.</text>
</comment>
<comment type="similarity">
    <text evidence="1">Belongs to the methyltransferase superfamily. UbiG/COQ3 family.</text>
</comment>
<dbReference type="EC" id="2.1.1.222" evidence="1"/>
<dbReference type="EC" id="2.1.1.64" evidence="1"/>
<dbReference type="EMBL" id="CP000947">
    <property type="protein sequence ID" value="ACA31339.1"/>
    <property type="molecule type" value="Genomic_DNA"/>
</dbReference>
<dbReference type="RefSeq" id="WP_012340716.1">
    <property type="nucleotide sequence ID" value="NC_010519.1"/>
</dbReference>
<dbReference type="SMR" id="B0UUV6"/>
<dbReference type="STRING" id="228400.HSM_1579"/>
<dbReference type="GeneID" id="31487883"/>
<dbReference type="KEGG" id="hsm:HSM_1579"/>
<dbReference type="HOGENOM" id="CLU_042432_5_0_6"/>
<dbReference type="UniPathway" id="UPA00232"/>
<dbReference type="GO" id="GO:0102208">
    <property type="term" value="F:2-polyprenyl-6-hydroxyphenol methylase activity"/>
    <property type="evidence" value="ECO:0007669"/>
    <property type="project" value="UniProtKB-EC"/>
</dbReference>
<dbReference type="GO" id="GO:0061542">
    <property type="term" value="F:3-demethylubiquinol 3-O-methyltransferase activity"/>
    <property type="evidence" value="ECO:0007669"/>
    <property type="project" value="UniProtKB-UniRule"/>
</dbReference>
<dbReference type="GO" id="GO:0010420">
    <property type="term" value="F:polyprenyldihydroxybenzoate methyltransferase activity"/>
    <property type="evidence" value="ECO:0007669"/>
    <property type="project" value="InterPro"/>
</dbReference>
<dbReference type="GO" id="GO:0032259">
    <property type="term" value="P:methylation"/>
    <property type="evidence" value="ECO:0007669"/>
    <property type="project" value="UniProtKB-KW"/>
</dbReference>
<dbReference type="CDD" id="cd02440">
    <property type="entry name" value="AdoMet_MTases"/>
    <property type="match status" value="1"/>
</dbReference>
<dbReference type="FunFam" id="3.40.50.150:FF:000028">
    <property type="entry name" value="Ubiquinone biosynthesis O-methyltransferase"/>
    <property type="match status" value="1"/>
</dbReference>
<dbReference type="Gene3D" id="3.40.50.150">
    <property type="entry name" value="Vaccinia Virus protein VP39"/>
    <property type="match status" value="1"/>
</dbReference>
<dbReference type="HAMAP" id="MF_00472">
    <property type="entry name" value="UbiG"/>
    <property type="match status" value="1"/>
</dbReference>
<dbReference type="InterPro" id="IPR029063">
    <property type="entry name" value="SAM-dependent_MTases_sf"/>
</dbReference>
<dbReference type="InterPro" id="IPR010233">
    <property type="entry name" value="UbiG_MeTrfase"/>
</dbReference>
<dbReference type="NCBIfam" id="TIGR01983">
    <property type="entry name" value="UbiG"/>
    <property type="match status" value="1"/>
</dbReference>
<dbReference type="PANTHER" id="PTHR43464">
    <property type="entry name" value="METHYLTRANSFERASE"/>
    <property type="match status" value="1"/>
</dbReference>
<dbReference type="PANTHER" id="PTHR43464:SF19">
    <property type="entry name" value="UBIQUINONE BIOSYNTHESIS O-METHYLTRANSFERASE, MITOCHONDRIAL"/>
    <property type="match status" value="1"/>
</dbReference>
<dbReference type="Pfam" id="PF13489">
    <property type="entry name" value="Methyltransf_23"/>
    <property type="match status" value="1"/>
</dbReference>
<dbReference type="SUPFAM" id="SSF53335">
    <property type="entry name" value="S-adenosyl-L-methionine-dependent methyltransferases"/>
    <property type="match status" value="1"/>
</dbReference>
<sequence>MQNLDPQELEKFEKMAKSWWDPNGDFKPIHQLNPTRLQYIQQQANGLTEKKVLDVGCGGGILSEAMAKQGAIVTGIDMTVAPLEVARLHAKEQGLVIDYQQITVEEFLQKQTALYAEKFDVITCMEMLEHVPDPLSIIQSCRALLKPNGVLFFSTINRTFKAWALVVLGAEYILKMLPKGTHDYDKFIKPAELLHWTDQANLVCKNICGYHYNLLTGKFWLNQDVSANYMATFQHKSI</sequence>
<proteinExistence type="inferred from homology"/>
<name>UBIG_HISS2</name>
<gene>
    <name evidence="1" type="primary">ubiG</name>
    <name type="ordered locus">HSM_1579</name>
</gene>
<keyword id="KW-0489">Methyltransferase</keyword>
<keyword id="KW-0949">S-adenosyl-L-methionine</keyword>
<keyword id="KW-0808">Transferase</keyword>
<keyword id="KW-0831">Ubiquinone biosynthesis</keyword>
<accession>B0UUV6</accession>
<reference key="1">
    <citation type="submission" date="2008-02" db="EMBL/GenBank/DDBJ databases">
        <title>Complete sequence of Haemophilus somnus 2336.</title>
        <authorList>
            <consortium name="US DOE Joint Genome Institute"/>
            <person name="Siddaramappa S."/>
            <person name="Duncan A.J."/>
            <person name="Challacombe J.F."/>
            <person name="Rainey D."/>
            <person name="Gillaspy A.F."/>
            <person name="Carson M."/>
            <person name="Gipson J."/>
            <person name="Gipson M."/>
            <person name="Bruce D."/>
            <person name="Detter J.C."/>
            <person name="Han C.S."/>
            <person name="Land M."/>
            <person name="Tapia R."/>
            <person name="Thompson L.S."/>
            <person name="Orvis J."/>
            <person name="Zaitshik J."/>
            <person name="Barnes G."/>
            <person name="Brettin T.S."/>
            <person name="Dyer D.W."/>
            <person name="Inzana T.J."/>
        </authorList>
    </citation>
    <scope>NUCLEOTIDE SEQUENCE [LARGE SCALE GENOMIC DNA]</scope>
    <source>
        <strain>2336</strain>
    </source>
</reference>